<organism>
    <name type="scientific">Vibrio anguillarum</name>
    <name type="common">Listonella anguillarum</name>
    <dbReference type="NCBI Taxonomy" id="55601"/>
    <lineage>
        <taxon>Bacteria</taxon>
        <taxon>Pseudomonadati</taxon>
        <taxon>Pseudomonadota</taxon>
        <taxon>Gammaproteobacteria</taxon>
        <taxon>Vibrionales</taxon>
        <taxon>Vibrionaceae</taxon>
        <taxon>Vibrio</taxon>
    </lineage>
</organism>
<name>TETR7_VIBAN</name>
<geneLocation type="plasmid">
    <name>pJA8122</name>
</geneLocation>
<reference key="1">
    <citation type="journal article" date="1992" name="Microbiol. Immunol.">
        <title>Nucleotide sequence analysis of the class G tetracycline resistance determinant from Vibrio anguillarum.</title>
        <authorList>
            <person name="Zhao J."/>
            <person name="Aoki T."/>
        </authorList>
    </citation>
    <scope>NUCLEOTIDE SEQUENCE [GENOMIC DNA]</scope>
    <source>
        <strain>MZ8122</strain>
    </source>
</reference>
<protein>
    <recommendedName>
        <fullName>Tetracycline repressor protein class G</fullName>
    </recommendedName>
</protein>
<evidence type="ECO:0000250" key="1">
    <source>
        <dbReference type="UniProtKB" id="P0ACT4"/>
    </source>
</evidence>
<evidence type="ECO:0000255" key="2">
    <source>
        <dbReference type="PROSITE-ProRule" id="PRU00335"/>
    </source>
</evidence>
<accession>P51560</accession>
<sequence>MTKLDKGTVIAAGLELLNEVGMDSLTTRKLAERLKVQQPALYWHFQNKRALLDALPEAMLRERHTRSLPEENEDWRVFLKENALSFRTALLSYRDGARIHAGTRPTEPNFGTAETQIRFLCAEGFCPKRAVWALRAVSHYVVGSVLEQQASDADERVPDRPDVSEQAPSSFLHVLFHELETDGMDAAFNFGLDSLIAGFERLRAAVLATD</sequence>
<proteinExistence type="evidence at transcript level"/>
<gene>
    <name type="primary">tetR</name>
</gene>
<dbReference type="EMBL" id="S52438">
    <property type="protein sequence ID" value="AAB24797.1"/>
    <property type="molecule type" value="Genomic_DNA"/>
</dbReference>
<dbReference type="SMR" id="P51560"/>
<dbReference type="GO" id="GO:0003700">
    <property type="term" value="F:DNA-binding transcription factor activity"/>
    <property type="evidence" value="ECO:0007669"/>
    <property type="project" value="TreeGrafter"/>
</dbReference>
<dbReference type="GO" id="GO:0046872">
    <property type="term" value="F:metal ion binding"/>
    <property type="evidence" value="ECO:0007669"/>
    <property type="project" value="UniProtKB-KW"/>
</dbReference>
<dbReference type="GO" id="GO:0000976">
    <property type="term" value="F:transcription cis-regulatory region binding"/>
    <property type="evidence" value="ECO:0007669"/>
    <property type="project" value="TreeGrafter"/>
</dbReference>
<dbReference type="GO" id="GO:0045892">
    <property type="term" value="P:negative regulation of DNA-templated transcription"/>
    <property type="evidence" value="ECO:0007669"/>
    <property type="project" value="InterPro"/>
</dbReference>
<dbReference type="GO" id="GO:0046677">
    <property type="term" value="P:response to antibiotic"/>
    <property type="evidence" value="ECO:0007669"/>
    <property type="project" value="UniProtKB-KW"/>
</dbReference>
<dbReference type="Gene3D" id="1.10.10.60">
    <property type="entry name" value="Homeodomain-like"/>
    <property type="match status" value="1"/>
</dbReference>
<dbReference type="Gene3D" id="1.10.357.10">
    <property type="entry name" value="Tetracycline Repressor, domain 2"/>
    <property type="match status" value="1"/>
</dbReference>
<dbReference type="InterPro" id="IPR023772">
    <property type="entry name" value="DNA-bd_HTH_TetR-type_CS"/>
</dbReference>
<dbReference type="InterPro" id="IPR009057">
    <property type="entry name" value="Homeodomain-like_sf"/>
</dbReference>
<dbReference type="InterPro" id="IPR050109">
    <property type="entry name" value="HTH-type_TetR-like_transc_reg"/>
</dbReference>
<dbReference type="InterPro" id="IPR001647">
    <property type="entry name" value="HTH_TetR"/>
</dbReference>
<dbReference type="InterPro" id="IPR004111">
    <property type="entry name" value="Repressor_TetR_C"/>
</dbReference>
<dbReference type="InterPro" id="IPR003012">
    <property type="entry name" value="Tet_transcr_reg_TetR"/>
</dbReference>
<dbReference type="InterPro" id="IPR036271">
    <property type="entry name" value="Tet_transcr_reg_TetR-rel_C_sf"/>
</dbReference>
<dbReference type="NCBIfam" id="NF010319">
    <property type="entry name" value="PRK13756.1"/>
    <property type="match status" value="1"/>
</dbReference>
<dbReference type="PANTHER" id="PTHR30055">
    <property type="entry name" value="HTH-TYPE TRANSCRIPTIONAL REGULATOR RUTR"/>
    <property type="match status" value="1"/>
</dbReference>
<dbReference type="PANTHER" id="PTHR30055:SF151">
    <property type="entry name" value="TRANSCRIPTIONAL REGULATORY PROTEIN"/>
    <property type="match status" value="1"/>
</dbReference>
<dbReference type="Pfam" id="PF02909">
    <property type="entry name" value="TetR_C_1"/>
    <property type="match status" value="1"/>
</dbReference>
<dbReference type="Pfam" id="PF00440">
    <property type="entry name" value="TetR_N"/>
    <property type="match status" value="1"/>
</dbReference>
<dbReference type="PRINTS" id="PR00455">
    <property type="entry name" value="HTHTETR"/>
</dbReference>
<dbReference type="PRINTS" id="PR00400">
    <property type="entry name" value="TETREPRESSOR"/>
</dbReference>
<dbReference type="SUPFAM" id="SSF46689">
    <property type="entry name" value="Homeodomain-like"/>
    <property type="match status" value="1"/>
</dbReference>
<dbReference type="SUPFAM" id="SSF48498">
    <property type="entry name" value="Tetracyclin repressor-like, C-terminal domain"/>
    <property type="match status" value="1"/>
</dbReference>
<dbReference type="PROSITE" id="PS01081">
    <property type="entry name" value="HTH_TETR_1"/>
    <property type="match status" value="1"/>
</dbReference>
<dbReference type="PROSITE" id="PS50977">
    <property type="entry name" value="HTH_TETR_2"/>
    <property type="match status" value="1"/>
</dbReference>
<keyword id="KW-0046">Antibiotic resistance</keyword>
<keyword id="KW-0238">DNA-binding</keyword>
<keyword id="KW-0460">Magnesium</keyword>
<keyword id="KW-0479">Metal-binding</keyword>
<keyword id="KW-0614">Plasmid</keyword>
<keyword id="KW-0678">Repressor</keyword>
<keyword id="KW-0804">Transcription</keyword>
<keyword id="KW-0805">Transcription regulation</keyword>
<comment type="function">
    <text>TetR is the repressor of the tetracycline resistance element; its N-terminal region forms a helix-turn-helix structure and binds DNA. Binding of tetracycline to TetR reduces the repressor affinity for the tetracycline resistance gene (tetA) promoter operator sites.</text>
</comment>
<comment type="induction">
    <text>By the [Mg-tetracycline]+ complex.</text>
</comment>
<feature type="chain" id="PRO_0000070618" description="Tetracycline repressor protein class G">
    <location>
        <begin position="1"/>
        <end position="210"/>
    </location>
</feature>
<feature type="domain" description="HTH tetR-type" evidence="2">
    <location>
        <begin position="3"/>
        <end position="63"/>
    </location>
</feature>
<feature type="DNA-binding region" description="H-T-H motif" evidence="2">
    <location>
        <begin position="26"/>
        <end position="45"/>
    </location>
</feature>
<feature type="binding site" evidence="1">
    <location>
        <position position="64"/>
    </location>
    <ligand>
        <name>tetracycline</name>
        <dbReference type="ChEBI" id="CHEBI:77932"/>
    </ligand>
</feature>
<feature type="binding site" evidence="1">
    <location>
        <position position="82"/>
    </location>
    <ligand>
        <name>tetracycline</name>
        <dbReference type="ChEBI" id="CHEBI:77932"/>
    </ligand>
</feature>
<feature type="binding site" evidence="1">
    <location>
        <position position="100"/>
    </location>
    <ligand>
        <name>Mg(2+)</name>
        <dbReference type="ChEBI" id="CHEBI:18420"/>
    </ligand>
</feature>